<name>RL29_SACEN</name>
<sequence>MAAGVTATELRELADDELVQKLKESKEELFNLRFQMATGQLENNRRLRVVRRDIARIYTIMRERELGLTVSPEGAEEGAA</sequence>
<keyword id="KW-1185">Reference proteome</keyword>
<keyword id="KW-0687">Ribonucleoprotein</keyword>
<keyword id="KW-0689">Ribosomal protein</keyword>
<evidence type="ECO:0000255" key="1">
    <source>
        <dbReference type="HAMAP-Rule" id="MF_00374"/>
    </source>
</evidence>
<evidence type="ECO:0000305" key="2"/>
<protein>
    <recommendedName>
        <fullName evidence="1">Large ribosomal subunit protein uL29</fullName>
    </recommendedName>
    <alternativeName>
        <fullName evidence="2">50S ribosomal protein L29</fullName>
    </alternativeName>
</protein>
<accession>A4FPL7</accession>
<dbReference type="EMBL" id="AM420293">
    <property type="protein sequence ID" value="CAM05992.1"/>
    <property type="molecule type" value="Genomic_DNA"/>
</dbReference>
<dbReference type="RefSeq" id="WP_009948638.1">
    <property type="nucleotide sequence ID" value="NC_009142.1"/>
</dbReference>
<dbReference type="SMR" id="A4FPL7"/>
<dbReference type="STRING" id="405948.SACE_6828"/>
<dbReference type="KEGG" id="sen:SACE_6828"/>
<dbReference type="eggNOG" id="COG0255">
    <property type="taxonomic scope" value="Bacteria"/>
</dbReference>
<dbReference type="HOGENOM" id="CLU_158491_3_3_11"/>
<dbReference type="OrthoDB" id="9815192at2"/>
<dbReference type="Proteomes" id="UP000006728">
    <property type="component" value="Chromosome"/>
</dbReference>
<dbReference type="GO" id="GO:0022625">
    <property type="term" value="C:cytosolic large ribosomal subunit"/>
    <property type="evidence" value="ECO:0007669"/>
    <property type="project" value="TreeGrafter"/>
</dbReference>
<dbReference type="GO" id="GO:0003735">
    <property type="term" value="F:structural constituent of ribosome"/>
    <property type="evidence" value="ECO:0007669"/>
    <property type="project" value="InterPro"/>
</dbReference>
<dbReference type="GO" id="GO:0006412">
    <property type="term" value="P:translation"/>
    <property type="evidence" value="ECO:0007669"/>
    <property type="project" value="UniProtKB-UniRule"/>
</dbReference>
<dbReference type="CDD" id="cd00427">
    <property type="entry name" value="Ribosomal_L29_HIP"/>
    <property type="match status" value="1"/>
</dbReference>
<dbReference type="FunFam" id="1.10.287.310:FF:000001">
    <property type="entry name" value="50S ribosomal protein L29"/>
    <property type="match status" value="1"/>
</dbReference>
<dbReference type="Gene3D" id="1.10.287.310">
    <property type="match status" value="1"/>
</dbReference>
<dbReference type="HAMAP" id="MF_00374">
    <property type="entry name" value="Ribosomal_uL29"/>
    <property type="match status" value="1"/>
</dbReference>
<dbReference type="InterPro" id="IPR050063">
    <property type="entry name" value="Ribosomal_protein_uL29"/>
</dbReference>
<dbReference type="InterPro" id="IPR001854">
    <property type="entry name" value="Ribosomal_uL29"/>
</dbReference>
<dbReference type="InterPro" id="IPR018254">
    <property type="entry name" value="Ribosomal_uL29_CS"/>
</dbReference>
<dbReference type="InterPro" id="IPR036049">
    <property type="entry name" value="Ribosomal_uL29_sf"/>
</dbReference>
<dbReference type="NCBIfam" id="TIGR00012">
    <property type="entry name" value="L29"/>
    <property type="match status" value="1"/>
</dbReference>
<dbReference type="PANTHER" id="PTHR10916">
    <property type="entry name" value="60S RIBOSOMAL PROTEIN L35/50S RIBOSOMAL PROTEIN L29"/>
    <property type="match status" value="1"/>
</dbReference>
<dbReference type="PANTHER" id="PTHR10916:SF0">
    <property type="entry name" value="LARGE RIBOSOMAL SUBUNIT PROTEIN UL29C"/>
    <property type="match status" value="1"/>
</dbReference>
<dbReference type="Pfam" id="PF00831">
    <property type="entry name" value="Ribosomal_L29"/>
    <property type="match status" value="1"/>
</dbReference>
<dbReference type="SUPFAM" id="SSF46561">
    <property type="entry name" value="Ribosomal protein L29 (L29p)"/>
    <property type="match status" value="1"/>
</dbReference>
<dbReference type="PROSITE" id="PS00579">
    <property type="entry name" value="RIBOSOMAL_L29"/>
    <property type="match status" value="1"/>
</dbReference>
<proteinExistence type="inferred from homology"/>
<feature type="chain" id="PRO_1000007594" description="Large ribosomal subunit protein uL29">
    <location>
        <begin position="1"/>
        <end position="80"/>
    </location>
</feature>
<comment type="similarity">
    <text evidence="1">Belongs to the universal ribosomal protein uL29 family.</text>
</comment>
<organism>
    <name type="scientific">Saccharopolyspora erythraea (strain ATCC 11635 / DSM 40517 / JCM 4748 / NBRC 13426 / NCIMB 8594 / NRRL 2338)</name>
    <dbReference type="NCBI Taxonomy" id="405948"/>
    <lineage>
        <taxon>Bacteria</taxon>
        <taxon>Bacillati</taxon>
        <taxon>Actinomycetota</taxon>
        <taxon>Actinomycetes</taxon>
        <taxon>Pseudonocardiales</taxon>
        <taxon>Pseudonocardiaceae</taxon>
        <taxon>Saccharopolyspora</taxon>
    </lineage>
</organism>
<reference key="1">
    <citation type="journal article" date="2007" name="Nat. Biotechnol.">
        <title>Complete genome sequence of the erythromycin-producing bacterium Saccharopolyspora erythraea NRRL23338.</title>
        <authorList>
            <person name="Oliynyk M."/>
            <person name="Samborskyy M."/>
            <person name="Lester J.B."/>
            <person name="Mironenko T."/>
            <person name="Scott N."/>
            <person name="Dickens S."/>
            <person name="Haydock S.F."/>
            <person name="Leadlay P.F."/>
        </authorList>
    </citation>
    <scope>NUCLEOTIDE SEQUENCE [LARGE SCALE GENOMIC DNA]</scope>
    <source>
        <strain>ATCC 11635 / DSM 40517 / JCM 4748 / NBRC 13426 / NCIMB 8594 / NRRL 2338</strain>
    </source>
</reference>
<gene>
    <name evidence="1" type="primary">rpmC</name>
    <name type="ordered locus">SACE_6828</name>
</gene>